<protein>
    <recommendedName>
        <fullName evidence="1">Pyridoxal 5'-phosphate synthase subunit PdxT</fullName>
        <ecNumber evidence="1">4.3.3.6</ecNumber>
    </recommendedName>
    <alternativeName>
        <fullName evidence="1">Pdx2</fullName>
    </alternativeName>
    <alternativeName>
        <fullName evidence="1">Pyridoxal 5'-phosphate synthase glutaminase subunit</fullName>
        <ecNumber evidence="1">3.5.1.2</ecNumber>
    </alternativeName>
</protein>
<keyword id="KW-0315">Glutamine amidotransferase</keyword>
<keyword id="KW-0378">Hydrolase</keyword>
<keyword id="KW-0456">Lyase</keyword>
<keyword id="KW-0663">Pyridoxal phosphate</keyword>
<keyword id="KW-1185">Reference proteome</keyword>
<evidence type="ECO:0000255" key="1">
    <source>
        <dbReference type="HAMAP-Rule" id="MF_01615"/>
    </source>
</evidence>
<organism>
    <name type="scientific">Haemophilus ducreyi (strain 35000HP / ATCC 700724)</name>
    <dbReference type="NCBI Taxonomy" id="233412"/>
    <lineage>
        <taxon>Bacteria</taxon>
        <taxon>Pseudomonadati</taxon>
        <taxon>Pseudomonadota</taxon>
        <taxon>Gammaproteobacteria</taxon>
        <taxon>Pasteurellales</taxon>
        <taxon>Pasteurellaceae</taxon>
        <taxon>Haemophilus</taxon>
    </lineage>
</organism>
<proteinExistence type="inferred from homology"/>
<accession>Q7VL87</accession>
<dbReference type="EC" id="4.3.3.6" evidence="1"/>
<dbReference type="EC" id="3.5.1.2" evidence="1"/>
<dbReference type="EMBL" id="AE017143">
    <property type="protein sequence ID" value="AAP96372.1"/>
    <property type="molecule type" value="Genomic_DNA"/>
</dbReference>
<dbReference type="RefSeq" id="WP_010945404.1">
    <property type="nucleotide sequence ID" value="NC_002940.2"/>
</dbReference>
<dbReference type="SMR" id="Q7VL87"/>
<dbReference type="STRING" id="233412.HD_1592"/>
<dbReference type="KEGG" id="hdu:HD_1592"/>
<dbReference type="eggNOG" id="COG0311">
    <property type="taxonomic scope" value="Bacteria"/>
</dbReference>
<dbReference type="HOGENOM" id="CLU_069674_2_0_6"/>
<dbReference type="OrthoDB" id="9810320at2"/>
<dbReference type="UniPathway" id="UPA00245"/>
<dbReference type="Proteomes" id="UP000001022">
    <property type="component" value="Chromosome"/>
</dbReference>
<dbReference type="GO" id="GO:0005829">
    <property type="term" value="C:cytosol"/>
    <property type="evidence" value="ECO:0007669"/>
    <property type="project" value="TreeGrafter"/>
</dbReference>
<dbReference type="GO" id="GO:1903600">
    <property type="term" value="C:glutaminase complex"/>
    <property type="evidence" value="ECO:0007669"/>
    <property type="project" value="TreeGrafter"/>
</dbReference>
<dbReference type="GO" id="GO:0004359">
    <property type="term" value="F:glutaminase activity"/>
    <property type="evidence" value="ECO:0007669"/>
    <property type="project" value="UniProtKB-UniRule"/>
</dbReference>
<dbReference type="GO" id="GO:0036381">
    <property type="term" value="F:pyridoxal 5'-phosphate synthase (glutamine hydrolysing) activity"/>
    <property type="evidence" value="ECO:0007669"/>
    <property type="project" value="UniProtKB-UniRule"/>
</dbReference>
<dbReference type="GO" id="GO:0006543">
    <property type="term" value="P:glutamine catabolic process"/>
    <property type="evidence" value="ECO:0007669"/>
    <property type="project" value="UniProtKB-UniRule"/>
</dbReference>
<dbReference type="GO" id="GO:0042823">
    <property type="term" value="P:pyridoxal phosphate biosynthetic process"/>
    <property type="evidence" value="ECO:0007669"/>
    <property type="project" value="UniProtKB-UniRule"/>
</dbReference>
<dbReference type="GO" id="GO:0008614">
    <property type="term" value="P:pyridoxine metabolic process"/>
    <property type="evidence" value="ECO:0007669"/>
    <property type="project" value="TreeGrafter"/>
</dbReference>
<dbReference type="CDD" id="cd01749">
    <property type="entry name" value="GATase1_PB"/>
    <property type="match status" value="1"/>
</dbReference>
<dbReference type="FunFam" id="3.40.50.880:FF:000010">
    <property type="entry name" value="uncharacterized protein LOC100176842 isoform X2"/>
    <property type="match status" value="1"/>
</dbReference>
<dbReference type="Gene3D" id="3.40.50.880">
    <property type="match status" value="1"/>
</dbReference>
<dbReference type="HAMAP" id="MF_01615">
    <property type="entry name" value="PdxT"/>
    <property type="match status" value="1"/>
</dbReference>
<dbReference type="InterPro" id="IPR029062">
    <property type="entry name" value="Class_I_gatase-like"/>
</dbReference>
<dbReference type="InterPro" id="IPR002161">
    <property type="entry name" value="PdxT/SNO"/>
</dbReference>
<dbReference type="InterPro" id="IPR021196">
    <property type="entry name" value="PdxT/SNO_CS"/>
</dbReference>
<dbReference type="NCBIfam" id="TIGR03800">
    <property type="entry name" value="PLP_synth_Pdx2"/>
    <property type="match status" value="1"/>
</dbReference>
<dbReference type="PANTHER" id="PTHR31559">
    <property type="entry name" value="PYRIDOXAL 5'-PHOSPHATE SYNTHASE SUBUNIT SNO"/>
    <property type="match status" value="1"/>
</dbReference>
<dbReference type="PANTHER" id="PTHR31559:SF0">
    <property type="entry name" value="PYRIDOXAL 5'-PHOSPHATE SYNTHASE SUBUNIT SNO1-RELATED"/>
    <property type="match status" value="1"/>
</dbReference>
<dbReference type="Pfam" id="PF01174">
    <property type="entry name" value="SNO"/>
    <property type="match status" value="1"/>
</dbReference>
<dbReference type="PIRSF" id="PIRSF005639">
    <property type="entry name" value="Glut_amidoT_SNO"/>
    <property type="match status" value="1"/>
</dbReference>
<dbReference type="SUPFAM" id="SSF52317">
    <property type="entry name" value="Class I glutamine amidotransferase-like"/>
    <property type="match status" value="1"/>
</dbReference>
<dbReference type="PROSITE" id="PS01236">
    <property type="entry name" value="PDXT_SNO_1"/>
    <property type="match status" value="1"/>
</dbReference>
<dbReference type="PROSITE" id="PS51130">
    <property type="entry name" value="PDXT_SNO_2"/>
    <property type="match status" value="1"/>
</dbReference>
<name>PDXT_HAEDU</name>
<gene>
    <name evidence="1" type="primary">pdxT</name>
    <name type="ordered locus">HD_1592</name>
</gene>
<reference key="1">
    <citation type="submission" date="2003-06" db="EMBL/GenBank/DDBJ databases">
        <title>The complete genome sequence of Haemophilus ducreyi.</title>
        <authorList>
            <person name="Munson R.S. Jr."/>
            <person name="Ray W.C."/>
            <person name="Mahairas G."/>
            <person name="Sabo P."/>
            <person name="Mungur R."/>
            <person name="Johnson L."/>
            <person name="Nguyen D."/>
            <person name="Wang J."/>
            <person name="Forst C."/>
            <person name="Hood L."/>
        </authorList>
    </citation>
    <scope>NUCLEOTIDE SEQUENCE [LARGE SCALE GENOMIC DNA]</scope>
    <source>
        <strain>35000HP / ATCC 700724</strain>
    </source>
</reference>
<feature type="chain" id="PRO_0000135640" description="Pyridoxal 5'-phosphate synthase subunit PdxT">
    <location>
        <begin position="1"/>
        <end position="189"/>
    </location>
</feature>
<feature type="active site" description="Nucleophile" evidence="1">
    <location>
        <position position="81"/>
    </location>
</feature>
<feature type="active site" description="Charge relay system" evidence="1">
    <location>
        <position position="172"/>
    </location>
</feature>
<feature type="active site" description="Charge relay system" evidence="1">
    <location>
        <position position="174"/>
    </location>
</feature>
<feature type="binding site" evidence="1">
    <location>
        <begin position="52"/>
        <end position="54"/>
    </location>
    <ligand>
        <name>L-glutamine</name>
        <dbReference type="ChEBI" id="CHEBI:58359"/>
    </ligand>
</feature>
<feature type="binding site" evidence="1">
    <location>
        <position position="108"/>
    </location>
    <ligand>
        <name>L-glutamine</name>
        <dbReference type="ChEBI" id="CHEBI:58359"/>
    </ligand>
</feature>
<feature type="binding site" evidence="1">
    <location>
        <begin position="136"/>
        <end position="137"/>
    </location>
    <ligand>
        <name>L-glutamine</name>
        <dbReference type="ChEBI" id="CHEBI:58359"/>
    </ligand>
</feature>
<sequence>MADYSRYTVGVLALQGAVTEHISQIESLGAKAIAVKQVEQLNQLDALVLPGGESTAMRRLMEANGLFERLKTFDKPILGTCAGLILLADEIIGGEQVHLAKMAIKVQRNAFGRQIDSFQTPLTVSGLDKPFPAVFIRAPYITEVGENVEVLAEWQGNVVLAKQGHFFACAFHPELTNDNRIMALLLAQL</sequence>
<comment type="function">
    <text evidence="1">Catalyzes the hydrolysis of glutamine to glutamate and ammonia as part of the biosynthesis of pyridoxal 5'-phosphate. The resulting ammonia molecule is channeled to the active site of PdxS.</text>
</comment>
<comment type="catalytic activity">
    <reaction evidence="1">
        <text>aldehydo-D-ribose 5-phosphate + D-glyceraldehyde 3-phosphate + L-glutamine = pyridoxal 5'-phosphate + L-glutamate + phosphate + 3 H2O + H(+)</text>
        <dbReference type="Rhea" id="RHEA:31507"/>
        <dbReference type="ChEBI" id="CHEBI:15377"/>
        <dbReference type="ChEBI" id="CHEBI:15378"/>
        <dbReference type="ChEBI" id="CHEBI:29985"/>
        <dbReference type="ChEBI" id="CHEBI:43474"/>
        <dbReference type="ChEBI" id="CHEBI:58273"/>
        <dbReference type="ChEBI" id="CHEBI:58359"/>
        <dbReference type="ChEBI" id="CHEBI:59776"/>
        <dbReference type="ChEBI" id="CHEBI:597326"/>
        <dbReference type="EC" id="4.3.3.6"/>
    </reaction>
</comment>
<comment type="catalytic activity">
    <reaction evidence="1">
        <text>L-glutamine + H2O = L-glutamate + NH4(+)</text>
        <dbReference type="Rhea" id="RHEA:15889"/>
        <dbReference type="ChEBI" id="CHEBI:15377"/>
        <dbReference type="ChEBI" id="CHEBI:28938"/>
        <dbReference type="ChEBI" id="CHEBI:29985"/>
        <dbReference type="ChEBI" id="CHEBI:58359"/>
        <dbReference type="EC" id="3.5.1.2"/>
    </reaction>
</comment>
<comment type="pathway">
    <text evidence="1">Cofactor biosynthesis; pyridoxal 5'-phosphate biosynthesis.</text>
</comment>
<comment type="subunit">
    <text evidence="1">In the presence of PdxS, forms a dodecamer of heterodimers. Only shows activity in the heterodimer.</text>
</comment>
<comment type="similarity">
    <text evidence="1">Belongs to the glutaminase PdxT/SNO family.</text>
</comment>